<sequence>MLLLLLPLLWGRERAEGQTSKLLTMQSSVTVQEGLCVHVPCSFSYPSHGWIYPGPVVHGYWFREGANTDQDAPVATNNPARAVWEETRDRFHLLGDPHTKNCTLSIRDARRSDAGRYFFRMEKGSIKWNYKHHRLSVNVTALTHRPNILIPGTLESGCPQNLTCSVPWACEQGTPPMISWIGTSVSPLDPSTTRSSVLTLIPQPQDHGTSLTCQVTFPGASVTTNKTVHLNVSYPPQNLTMTVFQGDGTVSTVLGNGSSLSLPEGQSLRLVCAVDAVDSNPPARLSLSWRGLTLCPSQPSNPGVLELPWVHLRDAAEFTCRAQNPLGSQQVYLNVSLQSKATSGVTQGVVGGAGATALVFLSFCVIFVVVRSCRKKSARPAAGVGDTGIEDANAVRGSASQGPLTEPWAEDSPPDQPPPASARSSVGEGELQYASLSFQMVKPWDSRGQEATDTEYSEIKIHR</sequence>
<protein>
    <recommendedName>
        <fullName>Sialic acid-binding Ig-like lectin 9</fullName>
        <shortName>Siglec-9</shortName>
    </recommendedName>
    <alternativeName>
        <fullName>CDw329</fullName>
    </alternativeName>
    <alternativeName>
        <fullName>Protein FOAP-9</fullName>
    </alternativeName>
    <cdAntigenName>CD329</cdAntigenName>
</protein>
<accession>Q9Y336</accession>
<accession>Q6GTU4</accession>
<accession>Q9BYI9</accession>
<organism>
    <name type="scientific">Homo sapiens</name>
    <name type="common">Human</name>
    <dbReference type="NCBI Taxonomy" id="9606"/>
    <lineage>
        <taxon>Eukaryota</taxon>
        <taxon>Metazoa</taxon>
        <taxon>Chordata</taxon>
        <taxon>Craniata</taxon>
        <taxon>Vertebrata</taxon>
        <taxon>Euteleostomi</taxon>
        <taxon>Mammalia</taxon>
        <taxon>Eutheria</taxon>
        <taxon>Euarchontoglires</taxon>
        <taxon>Primates</taxon>
        <taxon>Haplorrhini</taxon>
        <taxon>Catarrhini</taxon>
        <taxon>Hominidae</taxon>
        <taxon>Homo</taxon>
    </lineage>
</organism>
<evidence type="ECO:0000250" key="1"/>
<evidence type="ECO:0000255" key="2"/>
<evidence type="ECO:0000255" key="3">
    <source>
        <dbReference type="PROSITE-ProRule" id="PRU00114"/>
    </source>
</evidence>
<evidence type="ECO:0000256" key="4">
    <source>
        <dbReference type="SAM" id="MobiDB-lite"/>
    </source>
</evidence>
<evidence type="ECO:0000269" key="5">
    <source>
    </source>
</evidence>
<evidence type="ECO:0000269" key="6">
    <source>
    </source>
</evidence>
<evidence type="ECO:0000269" key="7">
    <source ref="4"/>
</evidence>
<evidence type="ECO:0000303" key="8">
    <source>
    </source>
</evidence>
<evidence type="ECO:0000305" key="9"/>
<gene>
    <name type="primary">SIGLEC9</name>
    <name type="ORF">UNQ668/PRO1302</name>
</gene>
<name>SIGL9_HUMAN</name>
<dbReference type="EMBL" id="AF135027">
    <property type="protein sequence ID" value="AAD26428.2"/>
    <property type="molecule type" value="Genomic_DNA"/>
</dbReference>
<dbReference type="EMBL" id="AF247180">
    <property type="protein sequence ID" value="AAF87223.1"/>
    <property type="molecule type" value="mRNA"/>
</dbReference>
<dbReference type="EMBL" id="AF227924">
    <property type="protein sequence ID" value="AAF71455.1"/>
    <property type="molecule type" value="mRNA"/>
</dbReference>
<dbReference type="EMBL" id="AB026265">
    <property type="protein sequence ID" value="BAB41100.1"/>
    <property type="molecule type" value="mRNA"/>
</dbReference>
<dbReference type="EMBL" id="AY358913">
    <property type="protein sequence ID" value="AAQ89272.1"/>
    <property type="molecule type" value="mRNA"/>
</dbReference>
<dbReference type="EMBL" id="AK297043">
    <property type="protein sequence ID" value="BAG59570.1"/>
    <property type="molecule type" value="mRNA"/>
</dbReference>
<dbReference type="EMBL" id="AC011473">
    <property type="protein sequence ID" value="AAG23261.1"/>
    <property type="molecule type" value="Genomic_DNA"/>
</dbReference>
<dbReference type="EMBL" id="BC035365">
    <property type="protein sequence ID" value="AAH35365.2"/>
    <property type="molecule type" value="mRNA"/>
</dbReference>
<dbReference type="CCDS" id="CCDS12825.1">
    <molecule id="Q9Y336-1"/>
</dbReference>
<dbReference type="CCDS" id="CCDS56100.1">
    <molecule id="Q9Y336-2"/>
</dbReference>
<dbReference type="RefSeq" id="NP_001185487.1">
    <molecule id="Q9Y336-2"/>
    <property type="nucleotide sequence ID" value="NM_001198558.1"/>
</dbReference>
<dbReference type="RefSeq" id="NP_055256.1">
    <molecule id="Q9Y336-1"/>
    <property type="nucleotide sequence ID" value="NM_014441.3"/>
</dbReference>
<dbReference type="RefSeq" id="XP_047294571.1">
    <molecule id="Q9Y336-1"/>
    <property type="nucleotide sequence ID" value="XM_047438615.1"/>
</dbReference>
<dbReference type="RefSeq" id="XP_047294572.1">
    <molecule id="Q9Y336-1"/>
    <property type="nucleotide sequence ID" value="XM_047438616.1"/>
</dbReference>
<dbReference type="RefSeq" id="XP_054176541.1">
    <molecule id="Q9Y336-1"/>
    <property type="nucleotide sequence ID" value="XM_054320566.1"/>
</dbReference>
<dbReference type="SMR" id="Q9Y336"/>
<dbReference type="BioGRID" id="118056">
    <property type="interactions" value="12"/>
</dbReference>
<dbReference type="FunCoup" id="Q9Y336">
    <property type="interactions" value="374"/>
</dbReference>
<dbReference type="IntAct" id="Q9Y336">
    <property type="interactions" value="13"/>
</dbReference>
<dbReference type="STRING" id="9606.ENSP00000413861"/>
<dbReference type="ChEMBL" id="CHEMBL4105860"/>
<dbReference type="GlyCosmos" id="Q9Y336">
    <property type="glycosylation" value="8 sites, No reported glycans"/>
</dbReference>
<dbReference type="GlyGen" id="Q9Y336">
    <property type="glycosylation" value="8 sites, 5 N-linked glycans (3 sites)"/>
</dbReference>
<dbReference type="iPTMnet" id="Q9Y336"/>
<dbReference type="PhosphoSitePlus" id="Q9Y336"/>
<dbReference type="BioMuta" id="SIGLEC9"/>
<dbReference type="DMDM" id="25009270"/>
<dbReference type="MassIVE" id="Q9Y336"/>
<dbReference type="PaxDb" id="9606-ENSP00000413861"/>
<dbReference type="PeptideAtlas" id="Q9Y336"/>
<dbReference type="ProteomicsDB" id="85970">
    <molecule id="Q9Y336-1"/>
</dbReference>
<dbReference type="Antibodypedia" id="2416">
    <property type="antibodies" value="626 antibodies from 33 providers"/>
</dbReference>
<dbReference type="CPTC" id="Q9Y336">
    <property type="antibodies" value="1 antibody"/>
</dbReference>
<dbReference type="DNASU" id="27180"/>
<dbReference type="Ensembl" id="ENST00000250360.8">
    <molecule id="Q9Y336-1"/>
    <property type="protein sequence ID" value="ENSP00000250360.2"/>
    <property type="gene ID" value="ENSG00000129450.9"/>
</dbReference>
<dbReference type="Ensembl" id="ENST00000440804.7">
    <molecule id="Q9Y336-2"/>
    <property type="protein sequence ID" value="ENSP00000413861.2"/>
    <property type="gene ID" value="ENSG00000129450.9"/>
</dbReference>
<dbReference type="GeneID" id="27180"/>
<dbReference type="KEGG" id="hsa:27180"/>
<dbReference type="MANE-Select" id="ENST00000250360.8">
    <property type="protein sequence ID" value="ENSP00000250360.2"/>
    <property type="RefSeq nucleotide sequence ID" value="NM_014441.3"/>
    <property type="RefSeq protein sequence ID" value="NP_055256.1"/>
</dbReference>
<dbReference type="UCSC" id="uc002pvu.4">
    <molecule id="Q9Y336-1"/>
    <property type="organism name" value="human"/>
</dbReference>
<dbReference type="AGR" id="HGNC:10878"/>
<dbReference type="CTD" id="27180"/>
<dbReference type="DisGeNET" id="27180"/>
<dbReference type="GeneCards" id="SIGLEC9"/>
<dbReference type="HGNC" id="HGNC:10878">
    <property type="gene designation" value="SIGLEC9"/>
</dbReference>
<dbReference type="HPA" id="ENSG00000129450">
    <property type="expression patterns" value="Tissue enhanced (lymphoid)"/>
</dbReference>
<dbReference type="MIM" id="605640">
    <property type="type" value="gene"/>
</dbReference>
<dbReference type="neXtProt" id="NX_Q9Y336"/>
<dbReference type="OpenTargets" id="ENSG00000129450"/>
<dbReference type="PharmGKB" id="PA35779"/>
<dbReference type="VEuPathDB" id="HostDB:ENSG00000129450"/>
<dbReference type="eggNOG" id="ENOG502S41V">
    <property type="taxonomic scope" value="Eukaryota"/>
</dbReference>
<dbReference type="GeneTree" id="ENSGT01080000257333"/>
<dbReference type="HOGENOM" id="CLU_024444_6_1_1"/>
<dbReference type="InParanoid" id="Q9Y336"/>
<dbReference type="OMA" id="LSFQMVK"/>
<dbReference type="OrthoDB" id="10012075at2759"/>
<dbReference type="PAN-GO" id="Q9Y336">
    <property type="GO annotations" value="3 GO annotations based on evolutionary models"/>
</dbReference>
<dbReference type="PhylomeDB" id="Q9Y336"/>
<dbReference type="PathwayCommons" id="Q9Y336"/>
<dbReference type="Reactome" id="R-HSA-198933">
    <property type="pathway name" value="Immunoregulatory interactions between a Lymphoid and a non-Lymphoid cell"/>
</dbReference>
<dbReference type="Reactome" id="R-HSA-6798695">
    <property type="pathway name" value="Neutrophil degranulation"/>
</dbReference>
<dbReference type="SignaLink" id="Q9Y336"/>
<dbReference type="BioGRID-ORCS" id="27180">
    <property type="hits" value="18 hits in 1141 CRISPR screens"/>
</dbReference>
<dbReference type="ChiTaRS" id="SIGLEC9">
    <property type="organism name" value="human"/>
</dbReference>
<dbReference type="GeneWiki" id="SIGLEC9"/>
<dbReference type="GenomeRNAi" id="27180"/>
<dbReference type="Pharos" id="Q9Y336">
    <property type="development level" value="Tbio"/>
</dbReference>
<dbReference type="PRO" id="PR:Q9Y336"/>
<dbReference type="Proteomes" id="UP000005640">
    <property type="component" value="Chromosome 19"/>
</dbReference>
<dbReference type="RNAct" id="Q9Y336">
    <property type="molecule type" value="protein"/>
</dbReference>
<dbReference type="Bgee" id="ENSG00000129450">
    <property type="expression patterns" value="Expressed in monocyte and 100 other cell types or tissues"/>
</dbReference>
<dbReference type="ExpressionAtlas" id="Q9Y336">
    <property type="expression patterns" value="baseline and differential"/>
</dbReference>
<dbReference type="GO" id="GO:0005886">
    <property type="term" value="C:plasma membrane"/>
    <property type="evidence" value="ECO:0000318"/>
    <property type="project" value="GO_Central"/>
</dbReference>
<dbReference type="GO" id="GO:0030667">
    <property type="term" value="C:secretory granule membrane"/>
    <property type="evidence" value="ECO:0000304"/>
    <property type="project" value="Reactome"/>
</dbReference>
<dbReference type="GO" id="GO:0030246">
    <property type="term" value="F:carbohydrate binding"/>
    <property type="evidence" value="ECO:0000303"/>
    <property type="project" value="UniProtKB"/>
</dbReference>
<dbReference type="GO" id="GO:0033691">
    <property type="term" value="F:sialic acid binding"/>
    <property type="evidence" value="ECO:0000318"/>
    <property type="project" value="GO_Central"/>
</dbReference>
<dbReference type="GO" id="GO:0007155">
    <property type="term" value="P:cell adhesion"/>
    <property type="evidence" value="ECO:0000318"/>
    <property type="project" value="GO_Central"/>
</dbReference>
<dbReference type="GO" id="GO:0007166">
    <property type="term" value="P:cell surface receptor signaling pathway"/>
    <property type="evidence" value="ECO:0000303"/>
    <property type="project" value="UniProtKB"/>
</dbReference>
<dbReference type="CDD" id="cd05712">
    <property type="entry name" value="IgV_CD33"/>
    <property type="match status" value="1"/>
</dbReference>
<dbReference type="FunFam" id="2.60.40.10:FF:000912">
    <property type="entry name" value="Myeloid cell surface antigen CD33"/>
    <property type="match status" value="1"/>
</dbReference>
<dbReference type="FunFam" id="2.60.40.10:FF:001240">
    <property type="entry name" value="Sialic acid binding Ig-like lectin E"/>
    <property type="match status" value="1"/>
</dbReference>
<dbReference type="FunFam" id="2.60.40.10:FF:000829">
    <property type="entry name" value="Sialic acid-binding Ig-like lectin 8"/>
    <property type="match status" value="1"/>
</dbReference>
<dbReference type="Gene3D" id="2.60.40.10">
    <property type="entry name" value="Immunoglobulins"/>
    <property type="match status" value="3"/>
</dbReference>
<dbReference type="InterPro" id="IPR007110">
    <property type="entry name" value="Ig-like_dom"/>
</dbReference>
<dbReference type="InterPro" id="IPR036179">
    <property type="entry name" value="Ig-like_dom_sf"/>
</dbReference>
<dbReference type="InterPro" id="IPR013783">
    <property type="entry name" value="Ig-like_fold"/>
</dbReference>
<dbReference type="InterPro" id="IPR003599">
    <property type="entry name" value="Ig_sub"/>
</dbReference>
<dbReference type="InterPro" id="IPR013106">
    <property type="entry name" value="Ig_V-set"/>
</dbReference>
<dbReference type="InterPro" id="IPR013151">
    <property type="entry name" value="Immunoglobulin_dom"/>
</dbReference>
<dbReference type="InterPro" id="IPR051036">
    <property type="entry name" value="SIGLEC"/>
</dbReference>
<dbReference type="PANTHER" id="PTHR12035">
    <property type="entry name" value="SIALIC ACID BINDING IMMUNOGLOBULIN-LIKE LECTIN"/>
    <property type="match status" value="1"/>
</dbReference>
<dbReference type="PANTHER" id="PTHR12035:SF138">
    <property type="entry name" value="SIALIC ACID-BINDING IG-LIKE LECTIN 9"/>
    <property type="match status" value="1"/>
</dbReference>
<dbReference type="Pfam" id="PF00047">
    <property type="entry name" value="ig"/>
    <property type="match status" value="1"/>
</dbReference>
<dbReference type="Pfam" id="PF07686">
    <property type="entry name" value="V-set"/>
    <property type="match status" value="1"/>
</dbReference>
<dbReference type="SMART" id="SM00409">
    <property type="entry name" value="IG"/>
    <property type="match status" value="3"/>
</dbReference>
<dbReference type="SUPFAM" id="SSF48726">
    <property type="entry name" value="Immunoglobulin"/>
    <property type="match status" value="3"/>
</dbReference>
<dbReference type="PROSITE" id="PS50835">
    <property type="entry name" value="IG_LIKE"/>
    <property type="match status" value="3"/>
</dbReference>
<proteinExistence type="evidence at protein level"/>
<reference key="1">
    <citation type="journal article" date="2000" name="Genomics">
        <title>Identification and molecular characterization of a novel member of the siglec family (SIGLEC9).</title>
        <authorList>
            <person name="Foussias G."/>
            <person name="Yousef G.M."/>
            <person name="Diamandis E.P."/>
        </authorList>
    </citation>
    <scope>NUCLEOTIDE SEQUENCE [GENOMIC DNA] (ISOFORM 1)</scope>
    <source>
        <tissue>Bone marrow</tissue>
    </source>
</reference>
<reference key="2">
    <citation type="journal article" date="2000" name="J. Biol. Chem.">
        <title>Siglec-9, a novel sialic acid binding member of the immunoglobulin superfamily expressed broadly on human blood leukocytes.</title>
        <authorList>
            <person name="Zhang J.Q."/>
            <person name="Nicoll G."/>
            <person name="Jones C."/>
            <person name="Crocker P.R."/>
        </authorList>
    </citation>
    <scope>NUCLEOTIDE SEQUENCE [MRNA] (ISOFORM 1)</scope>
</reference>
<reference key="3">
    <citation type="journal article" date="2000" name="J. Biol. Chem.">
        <title>Cloning, characterization, and phylogenetic analysis of siglec-9, a new member of the CD33-related group of siglecs. Evidence for co-evolution with sialic acid synthesis pathways.</title>
        <authorList>
            <person name="Angata T."/>
            <person name="Varki A."/>
        </authorList>
    </citation>
    <scope>NUCLEOTIDE SEQUENCE [MRNA] (ISOFORM 1)</scope>
    <scope>MUTAGENESIS OF ARG-120</scope>
    <source>
        <tissue>Peripheral blood</tissue>
    </source>
</reference>
<reference key="4">
    <citation type="submission" date="1999-04" db="EMBL/GenBank/DDBJ databases">
        <title>Molecular cloning of a novel gene, FOAP-9, which are induced by oxydized LDL in human macrophages.</title>
        <authorList>
            <person name="Takayama K."/>
            <person name="Fujii Y."/>
            <person name="Turitani K."/>
            <person name="Naitou K."/>
            <person name="Kawaguchi A."/>
            <person name="Ukai Y."/>
            <person name="Amemiya C."/>
            <person name="Yajima Y."/>
            <person name="Yazaki M."/>
        </authorList>
    </citation>
    <scope>NUCLEOTIDE SEQUENCE [MRNA] (ISOFORM 1)</scope>
    <scope>VARIANT GLU-315</scope>
</reference>
<reference key="5">
    <citation type="journal article" date="2003" name="Genome Res.">
        <title>The secreted protein discovery initiative (SPDI), a large-scale effort to identify novel human secreted and transmembrane proteins: a bioinformatics assessment.</title>
        <authorList>
            <person name="Clark H.F."/>
            <person name="Gurney A.L."/>
            <person name="Abaya E."/>
            <person name="Baker K."/>
            <person name="Baldwin D.T."/>
            <person name="Brush J."/>
            <person name="Chen J."/>
            <person name="Chow B."/>
            <person name="Chui C."/>
            <person name="Crowley C."/>
            <person name="Currell B."/>
            <person name="Deuel B."/>
            <person name="Dowd P."/>
            <person name="Eaton D."/>
            <person name="Foster J.S."/>
            <person name="Grimaldi C."/>
            <person name="Gu Q."/>
            <person name="Hass P.E."/>
            <person name="Heldens S."/>
            <person name="Huang A."/>
            <person name="Kim H.S."/>
            <person name="Klimowski L."/>
            <person name="Jin Y."/>
            <person name="Johnson S."/>
            <person name="Lee J."/>
            <person name="Lewis L."/>
            <person name="Liao D."/>
            <person name="Mark M.R."/>
            <person name="Robbie E."/>
            <person name="Sanchez C."/>
            <person name="Schoenfeld J."/>
            <person name="Seshagiri S."/>
            <person name="Simmons L."/>
            <person name="Singh J."/>
            <person name="Smith V."/>
            <person name="Stinson J."/>
            <person name="Vagts A."/>
            <person name="Vandlen R.L."/>
            <person name="Watanabe C."/>
            <person name="Wieand D."/>
            <person name="Woods K."/>
            <person name="Xie M.-H."/>
            <person name="Yansura D.G."/>
            <person name="Yi S."/>
            <person name="Yu G."/>
            <person name="Yuan J."/>
            <person name="Zhang M."/>
            <person name="Zhang Z."/>
            <person name="Goddard A.D."/>
            <person name="Wood W.I."/>
            <person name="Godowski P.J."/>
            <person name="Gray A.M."/>
        </authorList>
    </citation>
    <scope>NUCLEOTIDE SEQUENCE [LARGE SCALE MRNA] (ISOFORM 1)</scope>
</reference>
<reference key="6">
    <citation type="journal article" date="2004" name="Nat. Genet.">
        <title>Complete sequencing and characterization of 21,243 full-length human cDNAs.</title>
        <authorList>
            <person name="Ota T."/>
            <person name="Suzuki Y."/>
            <person name="Nishikawa T."/>
            <person name="Otsuki T."/>
            <person name="Sugiyama T."/>
            <person name="Irie R."/>
            <person name="Wakamatsu A."/>
            <person name="Hayashi K."/>
            <person name="Sato H."/>
            <person name="Nagai K."/>
            <person name="Kimura K."/>
            <person name="Makita H."/>
            <person name="Sekine M."/>
            <person name="Obayashi M."/>
            <person name="Nishi T."/>
            <person name="Shibahara T."/>
            <person name="Tanaka T."/>
            <person name="Ishii S."/>
            <person name="Yamamoto J."/>
            <person name="Saito K."/>
            <person name="Kawai Y."/>
            <person name="Isono Y."/>
            <person name="Nakamura Y."/>
            <person name="Nagahari K."/>
            <person name="Murakami K."/>
            <person name="Yasuda T."/>
            <person name="Iwayanagi T."/>
            <person name="Wagatsuma M."/>
            <person name="Shiratori A."/>
            <person name="Sudo H."/>
            <person name="Hosoiri T."/>
            <person name="Kaku Y."/>
            <person name="Kodaira H."/>
            <person name="Kondo H."/>
            <person name="Sugawara M."/>
            <person name="Takahashi M."/>
            <person name="Kanda K."/>
            <person name="Yokoi T."/>
            <person name="Furuya T."/>
            <person name="Kikkawa E."/>
            <person name="Omura Y."/>
            <person name="Abe K."/>
            <person name="Kamihara K."/>
            <person name="Katsuta N."/>
            <person name="Sato K."/>
            <person name="Tanikawa M."/>
            <person name="Yamazaki M."/>
            <person name="Ninomiya K."/>
            <person name="Ishibashi T."/>
            <person name="Yamashita H."/>
            <person name="Murakawa K."/>
            <person name="Fujimori K."/>
            <person name="Tanai H."/>
            <person name="Kimata M."/>
            <person name="Watanabe M."/>
            <person name="Hiraoka S."/>
            <person name="Chiba Y."/>
            <person name="Ishida S."/>
            <person name="Ono Y."/>
            <person name="Takiguchi S."/>
            <person name="Watanabe S."/>
            <person name="Yosida M."/>
            <person name="Hotuta T."/>
            <person name="Kusano J."/>
            <person name="Kanehori K."/>
            <person name="Takahashi-Fujii A."/>
            <person name="Hara H."/>
            <person name="Tanase T.-O."/>
            <person name="Nomura Y."/>
            <person name="Togiya S."/>
            <person name="Komai F."/>
            <person name="Hara R."/>
            <person name="Takeuchi K."/>
            <person name="Arita M."/>
            <person name="Imose N."/>
            <person name="Musashino K."/>
            <person name="Yuuki H."/>
            <person name="Oshima A."/>
            <person name="Sasaki N."/>
            <person name="Aotsuka S."/>
            <person name="Yoshikawa Y."/>
            <person name="Matsunawa H."/>
            <person name="Ichihara T."/>
            <person name="Shiohata N."/>
            <person name="Sano S."/>
            <person name="Moriya S."/>
            <person name="Momiyama H."/>
            <person name="Satoh N."/>
            <person name="Takami S."/>
            <person name="Terashima Y."/>
            <person name="Suzuki O."/>
            <person name="Nakagawa S."/>
            <person name="Senoh A."/>
            <person name="Mizoguchi H."/>
            <person name="Goto Y."/>
            <person name="Shimizu F."/>
            <person name="Wakebe H."/>
            <person name="Hishigaki H."/>
            <person name="Watanabe T."/>
            <person name="Sugiyama A."/>
            <person name="Takemoto M."/>
            <person name="Kawakami B."/>
            <person name="Yamazaki M."/>
            <person name="Watanabe K."/>
            <person name="Kumagai A."/>
            <person name="Itakura S."/>
            <person name="Fukuzumi Y."/>
            <person name="Fujimori Y."/>
            <person name="Komiyama M."/>
            <person name="Tashiro H."/>
            <person name="Tanigami A."/>
            <person name="Fujiwara T."/>
            <person name="Ono T."/>
            <person name="Yamada K."/>
            <person name="Fujii Y."/>
            <person name="Ozaki K."/>
            <person name="Hirao M."/>
            <person name="Ohmori Y."/>
            <person name="Kawabata A."/>
            <person name="Hikiji T."/>
            <person name="Kobatake N."/>
            <person name="Inagaki H."/>
            <person name="Ikema Y."/>
            <person name="Okamoto S."/>
            <person name="Okitani R."/>
            <person name="Kawakami T."/>
            <person name="Noguchi S."/>
            <person name="Itoh T."/>
            <person name="Shigeta K."/>
            <person name="Senba T."/>
            <person name="Matsumura K."/>
            <person name="Nakajima Y."/>
            <person name="Mizuno T."/>
            <person name="Morinaga M."/>
            <person name="Sasaki M."/>
            <person name="Togashi T."/>
            <person name="Oyama M."/>
            <person name="Hata H."/>
            <person name="Watanabe M."/>
            <person name="Komatsu T."/>
            <person name="Mizushima-Sugano J."/>
            <person name="Satoh T."/>
            <person name="Shirai Y."/>
            <person name="Takahashi Y."/>
            <person name="Nakagawa K."/>
            <person name="Okumura K."/>
            <person name="Nagase T."/>
            <person name="Nomura N."/>
            <person name="Kikuchi H."/>
            <person name="Masuho Y."/>
            <person name="Yamashita R."/>
            <person name="Nakai K."/>
            <person name="Yada T."/>
            <person name="Nakamura Y."/>
            <person name="Ohara O."/>
            <person name="Isogai T."/>
            <person name="Sugano S."/>
        </authorList>
    </citation>
    <scope>NUCLEOTIDE SEQUENCE [LARGE SCALE MRNA] (ISOFORM 2)</scope>
</reference>
<reference key="7">
    <citation type="journal article" date="2004" name="Nature">
        <title>The DNA sequence and biology of human chromosome 19.</title>
        <authorList>
            <person name="Grimwood J."/>
            <person name="Gordon L.A."/>
            <person name="Olsen A.S."/>
            <person name="Terry A."/>
            <person name="Schmutz J."/>
            <person name="Lamerdin J.E."/>
            <person name="Hellsten U."/>
            <person name="Goodstein D."/>
            <person name="Couronne O."/>
            <person name="Tran-Gyamfi M."/>
            <person name="Aerts A."/>
            <person name="Altherr M."/>
            <person name="Ashworth L."/>
            <person name="Bajorek E."/>
            <person name="Black S."/>
            <person name="Branscomb E."/>
            <person name="Caenepeel S."/>
            <person name="Carrano A.V."/>
            <person name="Caoile C."/>
            <person name="Chan Y.M."/>
            <person name="Christensen M."/>
            <person name="Cleland C.A."/>
            <person name="Copeland A."/>
            <person name="Dalin E."/>
            <person name="Dehal P."/>
            <person name="Denys M."/>
            <person name="Detter J.C."/>
            <person name="Escobar J."/>
            <person name="Flowers D."/>
            <person name="Fotopulos D."/>
            <person name="Garcia C."/>
            <person name="Georgescu A.M."/>
            <person name="Glavina T."/>
            <person name="Gomez M."/>
            <person name="Gonzales E."/>
            <person name="Groza M."/>
            <person name="Hammon N."/>
            <person name="Hawkins T."/>
            <person name="Haydu L."/>
            <person name="Ho I."/>
            <person name="Huang W."/>
            <person name="Israni S."/>
            <person name="Jett J."/>
            <person name="Kadner K."/>
            <person name="Kimball H."/>
            <person name="Kobayashi A."/>
            <person name="Larionov V."/>
            <person name="Leem S.-H."/>
            <person name="Lopez F."/>
            <person name="Lou Y."/>
            <person name="Lowry S."/>
            <person name="Malfatti S."/>
            <person name="Martinez D."/>
            <person name="McCready P.M."/>
            <person name="Medina C."/>
            <person name="Morgan J."/>
            <person name="Nelson K."/>
            <person name="Nolan M."/>
            <person name="Ovcharenko I."/>
            <person name="Pitluck S."/>
            <person name="Pollard M."/>
            <person name="Popkie A.P."/>
            <person name="Predki P."/>
            <person name="Quan G."/>
            <person name="Ramirez L."/>
            <person name="Rash S."/>
            <person name="Retterer J."/>
            <person name="Rodriguez A."/>
            <person name="Rogers S."/>
            <person name="Salamov A."/>
            <person name="Salazar A."/>
            <person name="She X."/>
            <person name="Smith D."/>
            <person name="Slezak T."/>
            <person name="Solovyev V."/>
            <person name="Thayer N."/>
            <person name="Tice H."/>
            <person name="Tsai M."/>
            <person name="Ustaszewska A."/>
            <person name="Vo N."/>
            <person name="Wagner M."/>
            <person name="Wheeler J."/>
            <person name="Wu K."/>
            <person name="Xie G."/>
            <person name="Yang J."/>
            <person name="Dubchak I."/>
            <person name="Furey T.S."/>
            <person name="DeJong P."/>
            <person name="Dickson M."/>
            <person name="Gordon D."/>
            <person name="Eichler E.E."/>
            <person name="Pennacchio L.A."/>
            <person name="Richardson P."/>
            <person name="Stubbs L."/>
            <person name="Rokhsar D.S."/>
            <person name="Myers R.M."/>
            <person name="Rubin E.M."/>
            <person name="Lucas S.M."/>
        </authorList>
    </citation>
    <scope>NUCLEOTIDE SEQUENCE [LARGE SCALE GENOMIC DNA]</scope>
</reference>
<reference key="8">
    <citation type="journal article" date="2004" name="Genome Res.">
        <title>The status, quality, and expansion of the NIH full-length cDNA project: the Mammalian Gene Collection (MGC).</title>
        <authorList>
            <consortium name="The MGC Project Team"/>
        </authorList>
    </citation>
    <scope>NUCLEOTIDE SEQUENCE [LARGE SCALE MRNA]</scope>
    <scope>VARIANTS GLU-100 AND GLU-315</scope>
    <source>
        <tissue>Brain</tissue>
    </source>
</reference>
<keyword id="KW-0025">Alternative splicing</keyword>
<keyword id="KW-0130">Cell adhesion</keyword>
<keyword id="KW-1015">Disulfide bond</keyword>
<keyword id="KW-0325">Glycoprotein</keyword>
<keyword id="KW-0393">Immunoglobulin domain</keyword>
<keyword id="KW-0430">Lectin</keyword>
<keyword id="KW-0472">Membrane</keyword>
<keyword id="KW-1267">Proteomics identification</keyword>
<keyword id="KW-1185">Reference proteome</keyword>
<keyword id="KW-0677">Repeat</keyword>
<keyword id="KW-0732">Signal</keyword>
<keyword id="KW-0812">Transmembrane</keyword>
<keyword id="KW-1133">Transmembrane helix</keyword>
<comment type="function">
    <text>Putative adhesion molecule that mediates sialic-acid dependent binding to cells. Preferentially binds to alpha-2,3- or alpha-2,6-linked sialic acid. The sialic acid recognition site may be masked by cis interactions with sialic acids on the same cell surface.</text>
</comment>
<comment type="interaction">
    <interactant intactId="EBI-12857926">
        <id>Q9Y336</id>
    </interactant>
    <interactant intactId="EBI-12244618">
        <id>Q6PL45-2</id>
        <label>BRICD5</label>
    </interactant>
    <organismsDiffer>false</organismsDiffer>
    <experiments>3</experiments>
</comment>
<comment type="interaction">
    <interactant intactId="EBI-12857926">
        <id>Q9Y336</id>
    </interactant>
    <interactant intactId="EBI-746987">
        <id>P62166</id>
        <label>NCS1</label>
    </interactant>
    <organismsDiffer>false</organismsDiffer>
    <experiments>3</experiments>
</comment>
<comment type="interaction">
    <interactant intactId="EBI-12857926">
        <id>Q9Y336</id>
    </interactant>
    <interactant intactId="EBI-10197617">
        <id>P11686</id>
        <label>SFTPC</label>
    </interactant>
    <organismsDiffer>false</organismsDiffer>
    <experiments>3</experiments>
</comment>
<comment type="interaction">
    <interactant intactId="EBI-12857926">
        <id>Q9Y336</id>
    </interactant>
    <interactant intactId="EBI-528701">
        <id>O00206</id>
        <label>TLR4</label>
    </interactant>
    <organismsDiffer>false</organismsDiffer>
    <experiments>2</experiments>
</comment>
<comment type="subcellular location">
    <subcellularLocation>
        <location>Membrane</location>
        <topology>Single-pass type I membrane protein</topology>
    </subcellularLocation>
</comment>
<comment type="alternative products">
    <event type="alternative splicing"/>
    <isoform>
        <id>Q9Y336-1</id>
        <name>1</name>
        <sequence type="displayed"/>
    </isoform>
    <isoform>
        <id>Q9Y336-2</id>
        <name>2</name>
        <sequence type="described" ref="VSP_054106"/>
    </isoform>
</comment>
<comment type="tissue specificity">
    <text>Expressed by peripheral blood leukocytes (neutrophils and monocytes but not eosinophils). Found in liver, fetal liver, bone marrow, placenta, spleen and in lower levels in skeletal muscle, fetal brain, stomach, lung, thymus, prostate, brain, mammary, adrenal gland, colon, trachea, cerebellum, testis, small intestine and spinal cordon.</text>
</comment>
<comment type="domain">
    <text>Contains 1 copy of a cytoplasmic motif that is referred to as the immunoreceptor tyrosine-based inhibitor motif (ITIM). This motif is involved in modulation of cellular responses. The phosphorylated ITIM motif can bind the SH2 domain of several SH2-containing phosphatases.</text>
</comment>
<comment type="similarity">
    <text evidence="9">Belongs to the immunoglobulin superfamily. SIGLEC (sialic acid binding Ig-like lectin) family.</text>
</comment>
<comment type="online information" name="Functional Glycomics Gateway - Glycan Binding">
    <link uri="http://www.functionalglycomics.org/glycomics/GBPServlet?&amp;operationType=view&amp;cbpId=cbp_hum_Itlect_275"/>
    <text>Siglec-9</text>
</comment>
<feature type="signal peptide" evidence="2">
    <location>
        <begin position="1"/>
        <end position="17"/>
    </location>
</feature>
<feature type="chain" id="PRO_0000014949" description="Sialic acid-binding Ig-like lectin 9">
    <location>
        <begin position="18"/>
        <end position="463"/>
    </location>
</feature>
<feature type="topological domain" description="Extracellular" evidence="2">
    <location>
        <begin position="18"/>
        <end position="348"/>
    </location>
</feature>
<feature type="transmembrane region" description="Helical" evidence="2">
    <location>
        <begin position="349"/>
        <end position="369"/>
    </location>
</feature>
<feature type="topological domain" description="Cytoplasmic" evidence="2">
    <location>
        <begin position="370"/>
        <end position="463"/>
    </location>
</feature>
<feature type="domain" description="Ig-like V-type">
    <location>
        <begin position="20"/>
        <end position="140"/>
    </location>
</feature>
<feature type="domain" description="Ig-like C2-type 1">
    <location>
        <begin position="146"/>
        <end position="229"/>
    </location>
</feature>
<feature type="domain" description="Ig-like C2-type 2">
    <location>
        <begin position="236"/>
        <end position="336"/>
    </location>
</feature>
<feature type="region of interest" description="Disordered" evidence="4">
    <location>
        <begin position="380"/>
        <end position="428"/>
    </location>
</feature>
<feature type="region of interest" description="Disordered" evidence="4">
    <location>
        <begin position="444"/>
        <end position="463"/>
    </location>
</feature>
<feature type="short sequence motif" description="ITIM motif">
    <location>
        <begin position="431"/>
        <end position="436"/>
    </location>
</feature>
<feature type="short sequence motif" description="SLAM-like motif">
    <location>
        <begin position="454"/>
        <end position="459"/>
    </location>
</feature>
<feature type="binding site" evidence="1">
    <location>
        <position position="120"/>
    </location>
    <ligand>
        <name>N-acetylneuraminate</name>
        <dbReference type="ChEBI" id="CHEBI:35418"/>
    </ligand>
</feature>
<feature type="glycosylation site" description="N-linked (GlcNAc...) asparagine" evidence="2">
    <location>
        <position position="101"/>
    </location>
</feature>
<feature type="glycosylation site" description="N-linked (GlcNAc...) asparagine" evidence="2">
    <location>
        <position position="138"/>
    </location>
</feature>
<feature type="glycosylation site" description="N-linked (GlcNAc...) asparagine" evidence="2">
    <location>
        <position position="161"/>
    </location>
</feature>
<feature type="glycosylation site" description="N-linked (GlcNAc...) asparagine" evidence="2">
    <location>
        <position position="225"/>
    </location>
</feature>
<feature type="glycosylation site" description="N-linked (GlcNAc...) asparagine" evidence="2">
    <location>
        <position position="231"/>
    </location>
</feature>
<feature type="glycosylation site" description="N-linked (GlcNAc...) asparagine" evidence="2">
    <location>
        <position position="238"/>
    </location>
</feature>
<feature type="glycosylation site" description="N-linked (GlcNAc...) asparagine" evidence="2">
    <location>
        <position position="256"/>
    </location>
</feature>
<feature type="glycosylation site" description="N-linked (GlcNAc...) asparagine" evidence="2">
    <location>
        <position position="334"/>
    </location>
</feature>
<feature type="disulfide bond" evidence="3">
    <location>
        <begin position="36"/>
        <end position="170"/>
    </location>
</feature>
<feature type="disulfide bond" evidence="3">
    <location>
        <begin position="41"/>
        <end position="102"/>
    </location>
</feature>
<feature type="disulfide bond" evidence="3">
    <location>
        <begin position="164"/>
        <end position="213"/>
    </location>
</feature>
<feature type="disulfide bond" evidence="3">
    <location>
        <begin position="272"/>
        <end position="320"/>
    </location>
</feature>
<feature type="splice variant" id="VSP_054106" description="In isoform 2." evidence="8">
    <original>GPLTEPWAEDSPPDQPPPASARSSVGEGELQYASLSFQMVKPWDSRGQEATDTEYSEIKIHR</original>
    <variation>ILNHFIGFPTFLGLGFEFLLNLRDLCCHPDSEFYVYHFSHFRLIKNIAGEIVWSLEGKILWLLDVSDFFHWFFLICVG</variation>
    <location>
        <begin position="402"/>
        <end position="463"/>
    </location>
</feature>
<feature type="sequence variant" id="VAR_014254" description="In dbSNP:rs2075803." evidence="6">
    <original>K</original>
    <variation>E</variation>
    <location>
        <position position="100"/>
    </location>
</feature>
<feature type="sequence variant" id="VAR_014255" description="In dbSNP:rs200658.">
    <original>S</original>
    <variation>N</variation>
    <location>
        <position position="125"/>
    </location>
</feature>
<feature type="sequence variant" id="VAR_033621" description="In dbSNP:rs16988910.">
    <original>K</original>
    <variation>Q</variation>
    <location>
        <position position="131"/>
    </location>
</feature>
<feature type="sequence variant" id="VAR_014256" description="In dbSNP:rs273687.">
    <original>N</original>
    <variation>K</variation>
    <location>
        <position position="147"/>
    </location>
</feature>
<feature type="sequence variant" id="VAR_014257" description="In dbSNP:rs2258983." evidence="6 7">
    <original>A</original>
    <variation>E</variation>
    <location>
        <position position="315"/>
    </location>
</feature>
<feature type="sequence variant" id="VAR_014258" description="In dbSNP:rs273688.">
    <original>A</original>
    <variation>D</variation>
    <location>
        <position position="316"/>
    </location>
</feature>
<feature type="sequence variant" id="VAR_033622" description="In dbSNP:rs273690.">
    <original>V</original>
    <variation>A</variation>
    <location>
        <position position="349"/>
    </location>
</feature>
<feature type="mutagenesis site" description="Loss of sialic acid binding." evidence="5">
    <original>R</original>
    <variation>K</variation>
    <location>
        <position position="120"/>
    </location>
</feature>
<feature type="sequence conflict" description="In Ref. 2; AAF87223." evidence="9" ref="2">
    <original>R</original>
    <variation>H</variation>
    <location>
        <position position="269"/>
    </location>
</feature>